<reference key="1">
    <citation type="submission" date="2007-11" db="EMBL/GenBank/DDBJ databases">
        <title>Complete sequence of chromosome of Shewanella baltica OS195.</title>
        <authorList>
            <consortium name="US DOE Joint Genome Institute"/>
            <person name="Copeland A."/>
            <person name="Lucas S."/>
            <person name="Lapidus A."/>
            <person name="Barry K."/>
            <person name="Glavina del Rio T."/>
            <person name="Dalin E."/>
            <person name="Tice H."/>
            <person name="Pitluck S."/>
            <person name="Chain P."/>
            <person name="Malfatti S."/>
            <person name="Shin M."/>
            <person name="Vergez L."/>
            <person name="Schmutz J."/>
            <person name="Larimer F."/>
            <person name="Land M."/>
            <person name="Hauser L."/>
            <person name="Kyrpides N."/>
            <person name="Kim E."/>
            <person name="Brettar I."/>
            <person name="Rodrigues J."/>
            <person name="Konstantinidis K."/>
            <person name="Klappenbach J."/>
            <person name="Hofle M."/>
            <person name="Tiedje J."/>
            <person name="Richardson P."/>
        </authorList>
    </citation>
    <scope>NUCLEOTIDE SEQUENCE [LARGE SCALE GENOMIC DNA]</scope>
    <source>
        <strain>OS195</strain>
    </source>
</reference>
<protein>
    <recommendedName>
        <fullName evidence="1">tRNA-cytidine(32) 2-sulfurtransferase</fullName>
        <ecNumber evidence="1">2.8.1.-</ecNumber>
    </recommendedName>
    <alternativeName>
        <fullName evidence="1">Two-thiocytidine biosynthesis protein A</fullName>
    </alternativeName>
    <alternativeName>
        <fullName evidence="1">tRNA 2-thiocytidine biosynthesis protein TtcA</fullName>
    </alternativeName>
</protein>
<keyword id="KW-0004">4Fe-4S</keyword>
<keyword id="KW-0067">ATP-binding</keyword>
<keyword id="KW-0963">Cytoplasm</keyword>
<keyword id="KW-0408">Iron</keyword>
<keyword id="KW-0411">Iron-sulfur</keyword>
<keyword id="KW-0460">Magnesium</keyword>
<keyword id="KW-0479">Metal-binding</keyword>
<keyword id="KW-0547">Nucleotide-binding</keyword>
<keyword id="KW-0694">RNA-binding</keyword>
<keyword id="KW-0808">Transferase</keyword>
<keyword id="KW-0819">tRNA processing</keyword>
<keyword id="KW-0820">tRNA-binding</keyword>
<evidence type="ECO:0000255" key="1">
    <source>
        <dbReference type="HAMAP-Rule" id="MF_01850"/>
    </source>
</evidence>
<evidence type="ECO:0000305" key="2"/>
<dbReference type="EC" id="2.8.1.-" evidence="1"/>
<dbReference type="EMBL" id="CP000891">
    <property type="protein sequence ID" value="ABX49379.1"/>
    <property type="status" value="ALT_INIT"/>
    <property type="molecule type" value="Genomic_DNA"/>
</dbReference>
<dbReference type="SMR" id="A9L1D4"/>
<dbReference type="KEGG" id="sbn:Sbal195_2210"/>
<dbReference type="HOGENOM" id="CLU_026481_0_0_6"/>
<dbReference type="Proteomes" id="UP000000770">
    <property type="component" value="Chromosome"/>
</dbReference>
<dbReference type="GO" id="GO:0005737">
    <property type="term" value="C:cytoplasm"/>
    <property type="evidence" value="ECO:0007669"/>
    <property type="project" value="UniProtKB-SubCell"/>
</dbReference>
<dbReference type="GO" id="GO:0051539">
    <property type="term" value="F:4 iron, 4 sulfur cluster binding"/>
    <property type="evidence" value="ECO:0007669"/>
    <property type="project" value="UniProtKB-UniRule"/>
</dbReference>
<dbReference type="GO" id="GO:0005524">
    <property type="term" value="F:ATP binding"/>
    <property type="evidence" value="ECO:0007669"/>
    <property type="project" value="UniProtKB-UniRule"/>
</dbReference>
<dbReference type="GO" id="GO:0000287">
    <property type="term" value="F:magnesium ion binding"/>
    <property type="evidence" value="ECO:0007669"/>
    <property type="project" value="UniProtKB-UniRule"/>
</dbReference>
<dbReference type="GO" id="GO:0016783">
    <property type="term" value="F:sulfurtransferase activity"/>
    <property type="evidence" value="ECO:0007669"/>
    <property type="project" value="UniProtKB-UniRule"/>
</dbReference>
<dbReference type="GO" id="GO:0000049">
    <property type="term" value="F:tRNA binding"/>
    <property type="evidence" value="ECO:0007669"/>
    <property type="project" value="UniProtKB-KW"/>
</dbReference>
<dbReference type="GO" id="GO:0034227">
    <property type="term" value="P:tRNA thio-modification"/>
    <property type="evidence" value="ECO:0007669"/>
    <property type="project" value="UniProtKB-UniRule"/>
</dbReference>
<dbReference type="CDD" id="cd24138">
    <property type="entry name" value="TtcA-like"/>
    <property type="match status" value="1"/>
</dbReference>
<dbReference type="Gene3D" id="3.40.50.620">
    <property type="entry name" value="HUPs"/>
    <property type="match status" value="1"/>
</dbReference>
<dbReference type="HAMAP" id="MF_01850">
    <property type="entry name" value="TtcA"/>
    <property type="match status" value="1"/>
</dbReference>
<dbReference type="InterPro" id="IPR014729">
    <property type="entry name" value="Rossmann-like_a/b/a_fold"/>
</dbReference>
<dbReference type="InterPro" id="IPR011063">
    <property type="entry name" value="TilS/TtcA_N"/>
</dbReference>
<dbReference type="InterPro" id="IPR012089">
    <property type="entry name" value="tRNA_Cyd_32_2_STrfase"/>
</dbReference>
<dbReference type="InterPro" id="IPR035107">
    <property type="entry name" value="tRNA_thiolation_TtcA_Ctu1"/>
</dbReference>
<dbReference type="NCBIfam" id="NF007972">
    <property type="entry name" value="PRK10696.1"/>
    <property type="match status" value="1"/>
</dbReference>
<dbReference type="PANTHER" id="PTHR43686:SF1">
    <property type="entry name" value="AMINOTRAN_5 DOMAIN-CONTAINING PROTEIN"/>
    <property type="match status" value="1"/>
</dbReference>
<dbReference type="PANTHER" id="PTHR43686">
    <property type="entry name" value="SULFURTRANSFERASE-RELATED"/>
    <property type="match status" value="1"/>
</dbReference>
<dbReference type="Pfam" id="PF01171">
    <property type="entry name" value="ATP_bind_3"/>
    <property type="match status" value="1"/>
</dbReference>
<dbReference type="PIRSF" id="PIRSF004976">
    <property type="entry name" value="ATPase_YdaO"/>
    <property type="match status" value="1"/>
</dbReference>
<dbReference type="SUPFAM" id="SSF52402">
    <property type="entry name" value="Adenine nucleotide alpha hydrolases-like"/>
    <property type="match status" value="1"/>
</dbReference>
<proteinExistence type="inferred from homology"/>
<accession>A9L1D4</accession>
<name>TTCA_SHEB9</name>
<organism>
    <name type="scientific">Shewanella baltica (strain OS195)</name>
    <dbReference type="NCBI Taxonomy" id="399599"/>
    <lineage>
        <taxon>Bacteria</taxon>
        <taxon>Pseudomonadati</taxon>
        <taxon>Pseudomonadota</taxon>
        <taxon>Gammaproteobacteria</taxon>
        <taxon>Alteromonadales</taxon>
        <taxon>Shewanellaceae</taxon>
        <taxon>Shewanella</taxon>
    </lineage>
</organism>
<gene>
    <name evidence="1" type="primary">ttcA</name>
    <name type="ordered locus">Sbal195_2210</name>
</gene>
<sequence>MSEELSKKHTTRLNKLQKRLRREVGSAIADYNMIEDGDKIMCCLSGGKDSYAMLDILMNLQQRAPIQFEIIAVNLDQKQPGFPEHVLPAYLEKLNVPYHILEKDTYSIVKDKIPEGKTTCSLCSRLRRGTLYGFAQRIGATKIALGHHRDDIIETLFLNMFFGGKMKAMPPKLLSDDGANVVIRPLAYCREKDLEEYANLREFPIIPCNLCGSQENLKRAAVKDMLNQWDRQYPGRIETIFTAMQNTAPSQGVDREQFDFVSLTRDPNAPMRGDVAEANLPAFDFLDIANSGRIDLDAAKRIDIVNTYEV</sequence>
<comment type="function">
    <text evidence="1">Catalyzes the ATP-dependent 2-thiolation of cytidine in position 32 of tRNA, to form 2-thiocytidine (s(2)C32). The sulfur atoms are provided by the cysteine/cysteine desulfurase (IscS) system.</text>
</comment>
<comment type="catalytic activity">
    <reaction evidence="1">
        <text>cytidine(32) in tRNA + S-sulfanyl-L-cysteinyl-[cysteine desulfurase] + AH2 + ATP = 2-thiocytidine(32) in tRNA + L-cysteinyl-[cysteine desulfurase] + A + AMP + diphosphate + H(+)</text>
        <dbReference type="Rhea" id="RHEA:57048"/>
        <dbReference type="Rhea" id="RHEA-COMP:10288"/>
        <dbReference type="Rhea" id="RHEA-COMP:12157"/>
        <dbReference type="Rhea" id="RHEA-COMP:12158"/>
        <dbReference type="Rhea" id="RHEA-COMP:14821"/>
        <dbReference type="ChEBI" id="CHEBI:13193"/>
        <dbReference type="ChEBI" id="CHEBI:15378"/>
        <dbReference type="ChEBI" id="CHEBI:17499"/>
        <dbReference type="ChEBI" id="CHEBI:29950"/>
        <dbReference type="ChEBI" id="CHEBI:30616"/>
        <dbReference type="ChEBI" id="CHEBI:33019"/>
        <dbReference type="ChEBI" id="CHEBI:61963"/>
        <dbReference type="ChEBI" id="CHEBI:82748"/>
        <dbReference type="ChEBI" id="CHEBI:141453"/>
        <dbReference type="ChEBI" id="CHEBI:456215"/>
    </reaction>
    <physiologicalReaction direction="left-to-right" evidence="1">
        <dbReference type="Rhea" id="RHEA:57049"/>
    </physiologicalReaction>
</comment>
<comment type="cofactor">
    <cofactor evidence="1">
        <name>Mg(2+)</name>
        <dbReference type="ChEBI" id="CHEBI:18420"/>
    </cofactor>
</comment>
<comment type="cofactor">
    <cofactor evidence="1">
        <name>[4Fe-4S] cluster</name>
        <dbReference type="ChEBI" id="CHEBI:49883"/>
    </cofactor>
    <text evidence="1">Binds 1 [4Fe-4S] cluster per subunit. The cluster is chelated by three Cys residues, the fourth Fe has a free coordination site that may bind a sulfur atom transferred from the persulfide of IscS.</text>
</comment>
<comment type="pathway">
    <text evidence="1">tRNA modification.</text>
</comment>
<comment type="subunit">
    <text evidence="1">Homodimer.</text>
</comment>
<comment type="subcellular location">
    <subcellularLocation>
        <location evidence="1">Cytoplasm</location>
    </subcellularLocation>
</comment>
<comment type="miscellaneous">
    <text evidence="1">The thiolation reaction likely consists of two steps: a first activation step by ATP to form an adenylated intermediate of the target base of tRNA, and a second nucleophilic substitution step of the sulfur (S) atom supplied by the hydrosulfide attached to the Fe-S cluster.</text>
</comment>
<comment type="similarity">
    <text evidence="1">Belongs to the TtcA family.</text>
</comment>
<comment type="sequence caution" evidence="2">
    <conflict type="erroneous initiation">
        <sequence resource="EMBL-CDS" id="ABX49379"/>
    </conflict>
    <text>Extended N-terminus.</text>
</comment>
<feature type="chain" id="PRO_0000348834" description="tRNA-cytidine(32) 2-sulfurtransferase">
    <location>
        <begin position="1"/>
        <end position="310"/>
    </location>
</feature>
<feature type="short sequence motif" description="PP-loop motif" evidence="1">
    <location>
        <begin position="45"/>
        <end position="50"/>
    </location>
</feature>
<feature type="binding site" evidence="1">
    <location>
        <position position="120"/>
    </location>
    <ligand>
        <name>[4Fe-4S] cluster</name>
        <dbReference type="ChEBI" id="CHEBI:49883"/>
    </ligand>
</feature>
<feature type="binding site" evidence="1">
    <location>
        <position position="123"/>
    </location>
    <ligand>
        <name>[4Fe-4S] cluster</name>
        <dbReference type="ChEBI" id="CHEBI:49883"/>
    </ligand>
</feature>
<feature type="binding site" evidence="1">
    <location>
        <position position="211"/>
    </location>
    <ligand>
        <name>[4Fe-4S] cluster</name>
        <dbReference type="ChEBI" id="CHEBI:49883"/>
    </ligand>
</feature>